<reference key="1">
    <citation type="journal article" date="2002" name="Nature">
        <title>The genome sequence of Schizosaccharomyces pombe.</title>
        <authorList>
            <person name="Wood V."/>
            <person name="Gwilliam R."/>
            <person name="Rajandream M.A."/>
            <person name="Lyne M.H."/>
            <person name="Lyne R."/>
            <person name="Stewart A."/>
            <person name="Sgouros J.G."/>
            <person name="Peat N."/>
            <person name="Hayles J."/>
            <person name="Baker S.G."/>
            <person name="Basham D."/>
            <person name="Bowman S."/>
            <person name="Brooks K."/>
            <person name="Brown D."/>
            <person name="Brown S."/>
            <person name="Chillingworth T."/>
            <person name="Churcher C.M."/>
            <person name="Collins M."/>
            <person name="Connor R."/>
            <person name="Cronin A."/>
            <person name="Davis P."/>
            <person name="Feltwell T."/>
            <person name="Fraser A."/>
            <person name="Gentles S."/>
            <person name="Goble A."/>
            <person name="Hamlin N."/>
            <person name="Harris D.E."/>
            <person name="Hidalgo J."/>
            <person name="Hodgson G."/>
            <person name="Holroyd S."/>
            <person name="Hornsby T."/>
            <person name="Howarth S."/>
            <person name="Huckle E.J."/>
            <person name="Hunt S."/>
            <person name="Jagels K."/>
            <person name="James K.D."/>
            <person name="Jones L."/>
            <person name="Jones M."/>
            <person name="Leather S."/>
            <person name="McDonald S."/>
            <person name="McLean J."/>
            <person name="Mooney P."/>
            <person name="Moule S."/>
            <person name="Mungall K.L."/>
            <person name="Murphy L.D."/>
            <person name="Niblett D."/>
            <person name="Odell C."/>
            <person name="Oliver K."/>
            <person name="O'Neil S."/>
            <person name="Pearson D."/>
            <person name="Quail M.A."/>
            <person name="Rabbinowitsch E."/>
            <person name="Rutherford K.M."/>
            <person name="Rutter S."/>
            <person name="Saunders D."/>
            <person name="Seeger K."/>
            <person name="Sharp S."/>
            <person name="Skelton J."/>
            <person name="Simmonds M.N."/>
            <person name="Squares R."/>
            <person name="Squares S."/>
            <person name="Stevens K."/>
            <person name="Taylor K."/>
            <person name="Taylor R.G."/>
            <person name="Tivey A."/>
            <person name="Walsh S.V."/>
            <person name="Warren T."/>
            <person name="Whitehead S."/>
            <person name="Woodward J.R."/>
            <person name="Volckaert G."/>
            <person name="Aert R."/>
            <person name="Robben J."/>
            <person name="Grymonprez B."/>
            <person name="Weltjens I."/>
            <person name="Vanstreels E."/>
            <person name="Rieger M."/>
            <person name="Schaefer M."/>
            <person name="Mueller-Auer S."/>
            <person name="Gabel C."/>
            <person name="Fuchs M."/>
            <person name="Duesterhoeft A."/>
            <person name="Fritzc C."/>
            <person name="Holzer E."/>
            <person name="Moestl D."/>
            <person name="Hilbert H."/>
            <person name="Borzym K."/>
            <person name="Langer I."/>
            <person name="Beck A."/>
            <person name="Lehrach H."/>
            <person name="Reinhardt R."/>
            <person name="Pohl T.M."/>
            <person name="Eger P."/>
            <person name="Zimmermann W."/>
            <person name="Wedler H."/>
            <person name="Wambutt R."/>
            <person name="Purnelle B."/>
            <person name="Goffeau A."/>
            <person name="Cadieu E."/>
            <person name="Dreano S."/>
            <person name="Gloux S."/>
            <person name="Lelaure V."/>
            <person name="Mottier S."/>
            <person name="Galibert F."/>
            <person name="Aves S.J."/>
            <person name="Xiang Z."/>
            <person name="Hunt C."/>
            <person name="Moore K."/>
            <person name="Hurst S.M."/>
            <person name="Lucas M."/>
            <person name="Rochet M."/>
            <person name="Gaillardin C."/>
            <person name="Tallada V.A."/>
            <person name="Garzon A."/>
            <person name="Thode G."/>
            <person name="Daga R.R."/>
            <person name="Cruzado L."/>
            <person name="Jimenez J."/>
            <person name="Sanchez M."/>
            <person name="del Rey F."/>
            <person name="Benito J."/>
            <person name="Dominguez A."/>
            <person name="Revuelta J.L."/>
            <person name="Moreno S."/>
            <person name="Armstrong J."/>
            <person name="Forsburg S.L."/>
            <person name="Cerutti L."/>
            <person name="Lowe T."/>
            <person name="McCombie W.R."/>
            <person name="Paulsen I."/>
            <person name="Potashkin J."/>
            <person name="Shpakovski G.V."/>
            <person name="Ussery D."/>
            <person name="Barrell B.G."/>
            <person name="Nurse P."/>
        </authorList>
    </citation>
    <scope>NUCLEOTIDE SEQUENCE [LARGE SCALE GENOMIC DNA]</scope>
    <source>
        <strain>972 / ATCC 24843</strain>
    </source>
</reference>
<organism>
    <name type="scientific">Schizosaccharomyces pombe (strain 972 / ATCC 24843)</name>
    <name type="common">Fission yeast</name>
    <dbReference type="NCBI Taxonomy" id="284812"/>
    <lineage>
        <taxon>Eukaryota</taxon>
        <taxon>Fungi</taxon>
        <taxon>Dikarya</taxon>
        <taxon>Ascomycota</taxon>
        <taxon>Taphrinomycotina</taxon>
        <taxon>Schizosaccharomycetes</taxon>
        <taxon>Schizosaccharomycetales</taxon>
        <taxon>Schizosaccharomycetaceae</taxon>
        <taxon>Schizosaccharomyces</taxon>
    </lineage>
</organism>
<feature type="chain" id="PRO_0000389110" description="Vacuolar ATPase assembly integral membrane protein vma21">
    <location>
        <begin position="1"/>
        <end position="88"/>
    </location>
</feature>
<feature type="topological domain" description="Cytoplasmic" evidence="1">
    <location>
        <begin position="1"/>
        <end position="18"/>
    </location>
</feature>
<feature type="transmembrane region" description="Helical" evidence="1">
    <location>
        <begin position="19"/>
        <end position="39"/>
    </location>
</feature>
<feature type="topological domain" description="Lumenal" evidence="1">
    <location>
        <begin position="40"/>
        <end position="53"/>
    </location>
</feature>
<feature type="transmembrane region" description="Helical" evidence="1">
    <location>
        <begin position="54"/>
        <end position="74"/>
    </location>
</feature>
<feature type="topological domain" description="Cytoplasmic" evidence="1">
    <location>
        <begin position="75"/>
        <end position="88"/>
    </location>
</feature>
<gene>
    <name type="primary">vma21</name>
    <name type="ORF">SPCC1235.16</name>
</gene>
<proteinExistence type="inferred from homology"/>
<sequence>MERKSQVSDTNNNSIPTNVLLKFVGFSVALFTLPLITYFWTLKTLFKGYQTLYAGLSAAVMVNIILALYIVAAFREDSGTPKKDIKRE</sequence>
<protein>
    <recommendedName>
        <fullName evidence="1">Vacuolar ATPase assembly integral membrane protein vma21</fullName>
    </recommendedName>
</protein>
<accession>C6Y4C8</accession>
<keyword id="KW-0968">Cytoplasmic vesicle</keyword>
<keyword id="KW-0256">Endoplasmic reticulum</keyword>
<keyword id="KW-0472">Membrane</keyword>
<keyword id="KW-1185">Reference proteome</keyword>
<keyword id="KW-0812">Transmembrane</keyword>
<keyword id="KW-1133">Transmembrane helix</keyword>
<comment type="function">
    <text evidence="1">Required for the assembly of the V0 complex of the vacuolar ATPase (V-ATPase) in the endoplasmic reticulum.</text>
</comment>
<comment type="subcellular location">
    <subcellularLocation>
        <location evidence="1">Endoplasmic reticulum membrane</location>
        <topology evidence="1">Multi-pass membrane protein</topology>
    </subcellularLocation>
    <subcellularLocation>
        <location evidence="1">Endoplasmic reticulum-Golgi intermediate compartment membrane</location>
        <topology evidence="1">Multi-pass membrane protein</topology>
    </subcellularLocation>
    <subcellularLocation>
        <location evidence="1">Cytoplasmic vesicle</location>
        <location evidence="1">COPII-coated vesicle membrane</location>
        <topology evidence="1">Multi-pass membrane protein</topology>
    </subcellularLocation>
</comment>
<comment type="similarity">
    <text evidence="1">Belongs to the VMA21 family.</text>
</comment>
<evidence type="ECO:0000255" key="1">
    <source>
        <dbReference type="HAMAP-Rule" id="MF_03058"/>
    </source>
</evidence>
<dbReference type="EMBL" id="CU329672">
    <property type="protein sequence ID" value="CBA11515.1"/>
    <property type="molecule type" value="Genomic_DNA"/>
</dbReference>
<dbReference type="RefSeq" id="XP_002788947.1">
    <property type="nucleotide sequence ID" value="XM_002788901.2"/>
</dbReference>
<dbReference type="SMR" id="C6Y4C8"/>
<dbReference type="BioGRID" id="1028675">
    <property type="interactions" value="3"/>
</dbReference>
<dbReference type="FunCoup" id="C6Y4C8">
    <property type="interactions" value="101"/>
</dbReference>
<dbReference type="STRING" id="284812.C6Y4C8"/>
<dbReference type="PaxDb" id="4896-SPCC1235.16.1"/>
<dbReference type="EnsemblFungi" id="SPCC1235.16.1">
    <property type="protein sequence ID" value="SPCC1235.16.1:pep"/>
    <property type="gene ID" value="SPCC1235.16"/>
</dbReference>
<dbReference type="PomBase" id="SPCC1235.16">
    <property type="gene designation" value="vma21"/>
</dbReference>
<dbReference type="VEuPathDB" id="FungiDB:SPCC1235.16"/>
<dbReference type="eggNOG" id="ENOG502SBNA">
    <property type="taxonomic scope" value="Eukaryota"/>
</dbReference>
<dbReference type="HOGENOM" id="CLU_154717_0_1_1"/>
<dbReference type="InParanoid" id="C6Y4C8"/>
<dbReference type="OMA" id="LVKLMVF"/>
<dbReference type="PRO" id="PR:C6Y4C8"/>
<dbReference type="Proteomes" id="UP000002485">
    <property type="component" value="Chromosome III"/>
</dbReference>
<dbReference type="GO" id="GO:0005789">
    <property type="term" value="C:endoplasmic reticulum membrane"/>
    <property type="evidence" value="ECO:0000318"/>
    <property type="project" value="GO_Central"/>
</dbReference>
<dbReference type="GO" id="GO:0033116">
    <property type="term" value="C:endoplasmic reticulum-Golgi intermediate compartment membrane"/>
    <property type="evidence" value="ECO:0007669"/>
    <property type="project" value="UniProtKB-SubCell"/>
</dbReference>
<dbReference type="GO" id="GO:0012507">
    <property type="term" value="C:ER to Golgi transport vesicle membrane"/>
    <property type="evidence" value="ECO:0007669"/>
    <property type="project" value="UniProtKB-SubCell"/>
</dbReference>
<dbReference type="GO" id="GO:0070072">
    <property type="term" value="P:vacuolar proton-transporting V-type ATPase complex assembly"/>
    <property type="evidence" value="ECO:0000318"/>
    <property type="project" value="GO_Central"/>
</dbReference>
<dbReference type="HAMAP" id="MF_03058">
    <property type="entry name" value="VMA21"/>
    <property type="match status" value="1"/>
</dbReference>
<dbReference type="InterPro" id="IPR019013">
    <property type="entry name" value="Vma21"/>
</dbReference>
<dbReference type="PANTHER" id="PTHR31792">
    <property type="entry name" value="VACUOLAR ATPASE ASSEMBLY INTEGRAL MEMBRANE PROTEIN VMA21"/>
    <property type="match status" value="1"/>
</dbReference>
<dbReference type="PANTHER" id="PTHR31792:SF3">
    <property type="entry name" value="VACUOLAR ATPASE ASSEMBLY INTEGRAL MEMBRANE PROTEIN VMA21"/>
    <property type="match status" value="1"/>
</dbReference>
<dbReference type="Pfam" id="PF09446">
    <property type="entry name" value="VMA21"/>
    <property type="match status" value="1"/>
</dbReference>
<name>VMA21_SCHPO</name>